<keyword id="KW-0002">3D-structure</keyword>
<keyword id="KW-1185">Reference proteome</keyword>
<keyword id="KW-0832">Ubl conjugation</keyword>
<keyword id="KW-0833">Ubl conjugation pathway</keyword>
<organism>
    <name type="scientific">Saccharomyces cerevisiae (strain ATCC 204508 / S288c)</name>
    <name type="common">Baker's yeast</name>
    <dbReference type="NCBI Taxonomy" id="559292"/>
    <lineage>
        <taxon>Eukaryota</taxon>
        <taxon>Fungi</taxon>
        <taxon>Dikarya</taxon>
        <taxon>Ascomycota</taxon>
        <taxon>Saccharomycotina</taxon>
        <taxon>Saccharomycetes</taxon>
        <taxon>Saccharomycetales</taxon>
        <taxon>Saccharomycetaceae</taxon>
        <taxon>Saccharomyces</taxon>
    </lineage>
</organism>
<sequence>MNQSDSSLMDLPLEIHLSLLEYVPNELRAVNKYFYVLHNHSYKEKSLAWIAEDNYIWAVVKHSLCLYVKSLDPLRQHAREIIQETKEPGFNVPLCMTKYIADSWYIVYNALQYPGKIINMGWDKYTKSQDSNGSDSTSNFNSRPKERTLMQSLTALPVNFWSRRKDEPTPVNVWFYVKNAHVARYIPKIITEIGICNYGPKQIVASAGYINELITSEGIYCVNLGHLPRLYDEQIFEGTGTTHLPLELKAIDRTDSDVCINGDLVLLGYDFIPYQISKPWLLFRIEPVNSIEAIFNYSECSFSYQFAWSLACLQSEEKISFPRDTIIGHGLPYKPSKLIRIFVYKHPEQKQDLGQEIALPNWNTPYLRR</sequence>
<gene>
    <name type="primary">UCC1</name>
    <name type="ordered locus">YLR224W</name>
</gene>
<feature type="chain" id="PRO_0000269758" description="F-box protein UCC1">
    <location>
        <begin position="1"/>
        <end position="369"/>
    </location>
</feature>
<feature type="domain" description="F-box">
    <location>
        <begin position="8"/>
        <end position="45"/>
    </location>
</feature>
<feature type="helix" evidence="5">
    <location>
        <begin position="8"/>
        <end position="10"/>
    </location>
</feature>
<feature type="helix" evidence="5">
    <location>
        <begin position="13"/>
        <end position="22"/>
    </location>
</feature>
<feature type="helix" evidence="5">
    <location>
        <begin position="24"/>
        <end position="27"/>
    </location>
</feature>
<feature type="turn" evidence="5">
    <location>
        <begin position="28"/>
        <end position="30"/>
    </location>
</feature>
<feature type="helix" evidence="5">
    <location>
        <begin position="32"/>
        <end position="49"/>
    </location>
</feature>
<feature type="helix" evidence="5">
    <location>
        <begin position="55"/>
        <end position="69"/>
    </location>
</feature>
<feature type="helix" evidence="5">
    <location>
        <begin position="72"/>
        <end position="79"/>
    </location>
</feature>
<feature type="helix" evidence="5">
    <location>
        <begin position="94"/>
        <end position="96"/>
    </location>
</feature>
<feature type="turn" evidence="5">
    <location>
        <begin position="98"/>
        <end position="102"/>
    </location>
</feature>
<feature type="helix" evidence="5">
    <location>
        <begin position="104"/>
        <end position="112"/>
    </location>
</feature>
<feature type="turn" evidence="5">
    <location>
        <begin position="120"/>
        <end position="123"/>
    </location>
</feature>
<feature type="strand" evidence="5">
    <location>
        <begin position="147"/>
        <end position="157"/>
    </location>
</feature>
<feature type="turn" evidence="5">
    <location>
        <begin position="158"/>
        <end position="166"/>
    </location>
</feature>
<feature type="strand" evidence="5">
    <location>
        <begin position="170"/>
        <end position="179"/>
    </location>
</feature>
<feature type="helix" evidence="5">
    <location>
        <begin position="182"/>
        <end position="188"/>
    </location>
</feature>
<feature type="strand" evidence="5">
    <location>
        <begin position="189"/>
        <end position="195"/>
    </location>
</feature>
<feature type="strand" evidence="5">
    <location>
        <begin position="202"/>
        <end position="204"/>
    </location>
</feature>
<feature type="helix" evidence="5">
    <location>
        <begin position="210"/>
        <end position="213"/>
    </location>
</feature>
<feature type="strand" evidence="5">
    <location>
        <begin position="216"/>
        <end position="226"/>
    </location>
</feature>
<feature type="helix" evidence="5">
    <location>
        <begin position="233"/>
        <end position="236"/>
    </location>
</feature>
<feature type="strand" evidence="6">
    <location>
        <begin position="237"/>
        <end position="239"/>
    </location>
</feature>
<feature type="strand" evidence="5">
    <location>
        <begin position="243"/>
        <end position="252"/>
    </location>
</feature>
<feature type="strand" evidence="5">
    <location>
        <begin position="254"/>
        <end position="257"/>
    </location>
</feature>
<feature type="turn" evidence="5">
    <location>
        <begin position="258"/>
        <end position="262"/>
    </location>
</feature>
<feature type="strand" evidence="5">
    <location>
        <begin position="263"/>
        <end position="270"/>
    </location>
</feature>
<feature type="strand" evidence="5">
    <location>
        <begin position="280"/>
        <end position="285"/>
    </location>
</feature>
<feature type="helix" evidence="5">
    <location>
        <begin position="291"/>
        <end position="293"/>
    </location>
</feature>
<feature type="helix" evidence="5">
    <location>
        <begin position="297"/>
        <end position="314"/>
    </location>
</feature>
<feature type="strand" evidence="5">
    <location>
        <begin position="341"/>
        <end position="346"/>
    </location>
</feature>
<feature type="helix" evidence="5">
    <location>
        <begin position="353"/>
        <end position="358"/>
    </location>
</feature>
<feature type="strand" evidence="5">
    <location>
        <begin position="362"/>
        <end position="364"/>
    </location>
</feature>
<reference key="1">
    <citation type="journal article" date="1997" name="Nature">
        <title>The nucleotide sequence of Saccharomyces cerevisiae chromosome XII.</title>
        <authorList>
            <person name="Johnston M."/>
            <person name="Hillier L.W."/>
            <person name="Riles L."/>
            <person name="Albermann K."/>
            <person name="Andre B."/>
            <person name="Ansorge W."/>
            <person name="Benes V."/>
            <person name="Brueckner M."/>
            <person name="Delius H."/>
            <person name="Dubois E."/>
            <person name="Duesterhoeft A."/>
            <person name="Entian K.-D."/>
            <person name="Floeth M."/>
            <person name="Goffeau A."/>
            <person name="Hebling U."/>
            <person name="Heumann K."/>
            <person name="Heuss-Neitzel D."/>
            <person name="Hilbert H."/>
            <person name="Hilger F."/>
            <person name="Kleine K."/>
            <person name="Koetter P."/>
            <person name="Louis E.J."/>
            <person name="Messenguy F."/>
            <person name="Mewes H.-W."/>
            <person name="Miosga T."/>
            <person name="Moestl D."/>
            <person name="Mueller-Auer S."/>
            <person name="Nentwich U."/>
            <person name="Obermaier B."/>
            <person name="Piravandi E."/>
            <person name="Pohl T.M."/>
            <person name="Portetelle D."/>
            <person name="Purnelle B."/>
            <person name="Rechmann S."/>
            <person name="Rieger M."/>
            <person name="Rinke M."/>
            <person name="Rose M."/>
            <person name="Scharfe M."/>
            <person name="Scherens B."/>
            <person name="Scholler P."/>
            <person name="Schwager C."/>
            <person name="Schwarz S."/>
            <person name="Underwood A.P."/>
            <person name="Urrestarazu L.A."/>
            <person name="Vandenbol M."/>
            <person name="Verhasselt P."/>
            <person name="Vierendeels F."/>
            <person name="Voet M."/>
            <person name="Volckaert G."/>
            <person name="Voss H."/>
            <person name="Wambutt R."/>
            <person name="Wedler E."/>
            <person name="Wedler H."/>
            <person name="Zimmermann F.K."/>
            <person name="Zollner A."/>
            <person name="Hani J."/>
            <person name="Hoheisel J.D."/>
        </authorList>
    </citation>
    <scope>NUCLEOTIDE SEQUENCE [LARGE SCALE GENOMIC DNA]</scope>
    <source>
        <strain>ATCC 204508 / S288c</strain>
    </source>
</reference>
<reference key="2">
    <citation type="journal article" date="2014" name="G3 (Bethesda)">
        <title>The reference genome sequence of Saccharomyces cerevisiae: Then and now.</title>
        <authorList>
            <person name="Engel S.R."/>
            <person name="Dietrich F.S."/>
            <person name="Fisk D.G."/>
            <person name="Binkley G."/>
            <person name="Balakrishnan R."/>
            <person name="Costanzo M.C."/>
            <person name="Dwight S.S."/>
            <person name="Hitz B.C."/>
            <person name="Karra K."/>
            <person name="Nash R.S."/>
            <person name="Weng S."/>
            <person name="Wong E.D."/>
            <person name="Lloyd P."/>
            <person name="Skrzypek M.S."/>
            <person name="Miyasato S.R."/>
            <person name="Simison M."/>
            <person name="Cherry J.M."/>
        </authorList>
    </citation>
    <scope>GENOME REANNOTATION</scope>
    <source>
        <strain>ATCC 204508 / S288c</strain>
    </source>
</reference>
<reference key="3">
    <citation type="journal article" date="1999" name="Philos. Trans. R. Soc. Lond., B, Biol. Sci.">
        <title>SCF ubiquitin protein ligases and phosphorylation-dependent proteolysis.</title>
        <authorList>
            <person name="Willems A.R."/>
            <person name="Goh T."/>
            <person name="Taylor L."/>
            <person name="Chernushevich I."/>
            <person name="Shevchenko A."/>
            <person name="Tyers M."/>
        </authorList>
    </citation>
    <scope>DOMAIN F-BOX</scope>
    <scope>FUNCTION PREDICTION</scope>
</reference>
<reference key="4">
    <citation type="journal article" date="2001" name="Nat. Cell Biol.">
        <title>Skp1 forms multiple protein complexes, including RAVE, a regulator of V-ATPase assembly.</title>
        <authorList>
            <person name="Seol J.H."/>
            <person name="Shevchenko A."/>
            <person name="Shevchenko A."/>
            <person name="Deshaies R.J."/>
        </authorList>
    </citation>
    <scope>INTERACTION WITH SKP1</scope>
    <scope>DOMAIN F-BOX</scope>
</reference>
<reference key="5">
    <citation type="journal article" date="2004" name="Proteins">
        <title>Functional interaction of 13 yeast SCF complexes with a set of yeast E2 enzymes in vitro.</title>
        <authorList>
            <person name="Kus B.M."/>
            <person name="Caldon C.E."/>
            <person name="Andorn-Broza R."/>
            <person name="Edwards A.M."/>
        </authorList>
    </citation>
    <scope>INTERACTION WITH SKP1</scope>
    <scope>RECONSTITUTION OF THE SCF(YLR224W) COMPLEX</scope>
    <scope>MONOUBIQUITINATION</scope>
</reference>
<reference key="6">
    <citation type="journal article" date="2015" name="Mol. Cell">
        <title>The ubiquitin ligase SCF(Ucc1) acts as a metabolic switch for the glyoxylate cycle.</title>
        <authorList>
            <person name="Nakatsukasa K."/>
            <person name="Nishimura T."/>
            <person name="Byrne S.D."/>
            <person name="Okamoto M."/>
            <person name="Takahashi-Nakaguchi A."/>
            <person name="Chibana H."/>
            <person name="Okumura F."/>
            <person name="Kamura T."/>
        </authorList>
    </citation>
    <scope>FUNCTION</scope>
    <scope>INTERACTION WITH CIT2</scope>
    <scope>INDUCTION</scope>
    <scope>DISRUPTION PHENOTYPE</scope>
</reference>
<protein>
    <recommendedName>
        <fullName>F-box protein UCC1</fullName>
    </recommendedName>
    <alternativeName>
        <fullName>Ubiquitination of citrate synthase in the glyoxylate cycle protein 1</fullName>
    </alternativeName>
</protein>
<dbReference type="EMBL" id="U19027">
    <property type="protein sequence ID" value="AAB67408.1"/>
    <property type="molecule type" value="Genomic_DNA"/>
</dbReference>
<dbReference type="EMBL" id="BK006945">
    <property type="protein sequence ID" value="DAA09540.1"/>
    <property type="molecule type" value="Genomic_DNA"/>
</dbReference>
<dbReference type="PIR" id="S51447">
    <property type="entry name" value="S51447"/>
</dbReference>
<dbReference type="RefSeq" id="NP_013325.1">
    <property type="nucleotide sequence ID" value="NM_001182111.1"/>
</dbReference>
<dbReference type="PDB" id="8GRE">
    <property type="method" value="X-ray"/>
    <property type="resolution" value="2.30 A"/>
    <property type="chains" value="C=1-369"/>
</dbReference>
<dbReference type="PDB" id="8GRF">
    <property type="method" value="X-ray"/>
    <property type="resolution" value="2.53 A"/>
    <property type="chains" value="C=1-369"/>
</dbReference>
<dbReference type="PDBsum" id="8GRE"/>
<dbReference type="PDBsum" id="8GRF"/>
<dbReference type="SMR" id="Q05947"/>
<dbReference type="BioGRID" id="31491">
    <property type="interactions" value="136"/>
</dbReference>
<dbReference type="DIP" id="DIP-1630N"/>
<dbReference type="FunCoup" id="Q05947">
    <property type="interactions" value="66"/>
</dbReference>
<dbReference type="IntAct" id="Q05947">
    <property type="interactions" value="4"/>
</dbReference>
<dbReference type="MINT" id="Q05947"/>
<dbReference type="STRING" id="4932.YLR224W"/>
<dbReference type="iPTMnet" id="Q05947"/>
<dbReference type="PaxDb" id="4932-YLR224W"/>
<dbReference type="PeptideAtlas" id="Q05947"/>
<dbReference type="EnsemblFungi" id="YLR224W_mRNA">
    <property type="protein sequence ID" value="YLR224W"/>
    <property type="gene ID" value="YLR224W"/>
</dbReference>
<dbReference type="GeneID" id="850921"/>
<dbReference type="KEGG" id="sce:YLR224W"/>
<dbReference type="AGR" id="SGD:S000004214"/>
<dbReference type="SGD" id="S000004214">
    <property type="gene designation" value="UCC1"/>
</dbReference>
<dbReference type="VEuPathDB" id="FungiDB:YLR224W"/>
<dbReference type="eggNOG" id="ENOG502S61D">
    <property type="taxonomic scope" value="Eukaryota"/>
</dbReference>
<dbReference type="HOGENOM" id="CLU_063944_0_0_1"/>
<dbReference type="InParanoid" id="Q05947"/>
<dbReference type="OMA" id="EDNEECT"/>
<dbReference type="OrthoDB" id="4065415at2759"/>
<dbReference type="BioCyc" id="YEAST:G3O-32338-MONOMER"/>
<dbReference type="UniPathway" id="UPA00143"/>
<dbReference type="BioGRID-ORCS" id="850921">
    <property type="hits" value="0 hits in 10 CRISPR screens"/>
</dbReference>
<dbReference type="PRO" id="PR:Q05947"/>
<dbReference type="Proteomes" id="UP000002311">
    <property type="component" value="Chromosome XII"/>
</dbReference>
<dbReference type="RNAct" id="Q05947">
    <property type="molecule type" value="protein"/>
</dbReference>
<dbReference type="GO" id="GO:0019005">
    <property type="term" value="C:SCF ubiquitin ligase complex"/>
    <property type="evidence" value="ECO:0000314"/>
    <property type="project" value="SGD"/>
</dbReference>
<dbReference type="GO" id="GO:0030674">
    <property type="term" value="F:protein-macromolecule adaptor activity"/>
    <property type="evidence" value="ECO:0000247"/>
    <property type="project" value="SGD"/>
</dbReference>
<dbReference type="GO" id="GO:0016567">
    <property type="term" value="P:protein ubiquitination"/>
    <property type="evidence" value="ECO:0007669"/>
    <property type="project" value="UniProtKB-UniPathway"/>
</dbReference>
<dbReference type="GO" id="GO:0031146">
    <property type="term" value="P:SCF-dependent proteasomal ubiquitin-dependent protein catabolic process"/>
    <property type="evidence" value="ECO:0000314"/>
    <property type="project" value="SGD"/>
</dbReference>
<proteinExistence type="evidence at protein level"/>
<name>UCC1_YEAST</name>
<accession>Q05947</accession>
<accession>D6VYM4</accession>
<comment type="function">
    <text evidence="1 4">Substrate recognition component of the SKP1-CUL1-F-box protein E3 ubiquitin-protein ligase complex SCF(UCC1) which mediates the ubiquitination and subsequent proteasomal degradation of target proteins (PubMed:10582239, PubMed:25982115). The SCF(UCC1) complex acts as a metabolic switch for the glyoxylate cycle and regulates the level of CIT2 protein to maintain citrate homeostasis (PubMed:25982115).</text>
</comment>
<comment type="pathway">
    <text>Protein modification; protein ubiquitination.</text>
</comment>
<comment type="subunit">
    <text evidence="2 3 4">Component of the SCF(UCC1) E3 ubiquitin-protein ligase complex composed of CDC53, SKP1, RBX1 and UCC1 (PubMed:11283612, PubMed:14747994). Interacts with CIT2 (PubMed:25982115).</text>
</comment>
<comment type="interaction">
    <interactant intactId="EBI-33647">
        <id>Q05947</id>
    </interactant>
    <interactant intactId="EBI-4090">
        <id>P52286</id>
        <label>SKP1</label>
    </interactant>
    <organismsDiffer>false</organismsDiffer>
    <experiments>4</experiments>
</comment>
<comment type="induction">
    <text evidence="4">Expression is down-regulated by the presence of C2-compounds such as acetate.</text>
</comment>
<comment type="PTM">
    <text>Monoubiquitinated by UBC4.</text>
</comment>
<comment type="disruption phenotype">
    <text evidence="4">Leads to poor ubiquitination of CIT2 and accumulation of citrate in the cells.</text>
</comment>
<evidence type="ECO:0000269" key="1">
    <source>
    </source>
</evidence>
<evidence type="ECO:0000269" key="2">
    <source>
    </source>
</evidence>
<evidence type="ECO:0000269" key="3">
    <source>
    </source>
</evidence>
<evidence type="ECO:0000269" key="4">
    <source>
    </source>
</evidence>
<evidence type="ECO:0007829" key="5">
    <source>
        <dbReference type="PDB" id="8GRE"/>
    </source>
</evidence>
<evidence type="ECO:0007829" key="6">
    <source>
        <dbReference type="PDB" id="8GRF"/>
    </source>
</evidence>